<name>OR9A2_HUMAN</name>
<sequence length="310" mass="35330">MMDNHSSATEFHLLGFPGSQGLHHILFAIFFFFYLVTLMGNTVIIVIVCVDKRLQSPMYFFLSHLSTLEILVTTIIVPMMLWGLLFLGCRQYLSLHVSLNFSCGTMEFALLGVMAVDRYVAVCNPLRYNIIMNSSTCIWVVIVSWVFGFLSEIWPIYATFQFTFRKSNSLDHFYCDRGQLLKLSCDNTLLTEFILFLMAVFILIGSLIPTIVSYTYIISTILKIPSASGRRKAFSTFASHFTCVVIGYGSCLFLYVKPKQTQGVEYNKIVSLLVSVLTPFLNPFIFTLRNDKVKEALRDGMKRCCQLLKD</sequence>
<comment type="function">
    <text evidence="3">Odorant receptor.</text>
</comment>
<comment type="subcellular location">
    <subcellularLocation>
        <location>Cell membrane</location>
        <topology>Multi-pass membrane protein</topology>
    </subcellularLocation>
</comment>
<comment type="similarity">
    <text evidence="2">Belongs to the G-protein coupled receptor 1 family.</text>
</comment>
<comment type="online information" name="Human Olfactory Receptor Data Exploratorium (HORDE)">
    <link uri="http://genome.weizmann.ac.il/horde/card/index/symbol:OR9A2"/>
</comment>
<feature type="chain" id="PRO_0000150676" description="Olfactory receptor 9A2">
    <location>
        <begin position="1"/>
        <end position="310"/>
    </location>
</feature>
<feature type="topological domain" description="Extracellular" evidence="1">
    <location>
        <begin position="1"/>
        <end position="24"/>
    </location>
</feature>
<feature type="transmembrane region" description="Helical; Name=1" evidence="1">
    <location>
        <begin position="25"/>
        <end position="45"/>
    </location>
</feature>
<feature type="topological domain" description="Cytoplasmic" evidence="1">
    <location>
        <begin position="46"/>
        <end position="53"/>
    </location>
</feature>
<feature type="transmembrane region" description="Helical; Name=2" evidence="1">
    <location>
        <begin position="54"/>
        <end position="74"/>
    </location>
</feature>
<feature type="topological domain" description="Extracellular" evidence="1">
    <location>
        <begin position="75"/>
        <end position="98"/>
    </location>
</feature>
<feature type="topological domain" description="Cytoplasmic" evidence="1">
    <location>
        <begin position="117"/>
        <end position="135"/>
    </location>
</feature>
<feature type="transmembrane region" description="Helical; Name=4" evidence="1">
    <location>
        <begin position="136"/>
        <end position="156"/>
    </location>
</feature>
<feature type="topological domain" description="Extracellular" evidence="1">
    <location>
        <begin position="157"/>
        <end position="193"/>
    </location>
</feature>
<feature type="transmembrane region" description="Helical; Name=5" evidence="1">
    <location>
        <begin position="194"/>
        <end position="213"/>
    </location>
</feature>
<feature type="topological domain" description="Cytoplasmic" evidence="1">
    <location>
        <begin position="214"/>
        <end position="233"/>
    </location>
</feature>
<feature type="transmembrane region" description="Helical; Name=6" evidence="1">
    <location>
        <begin position="234"/>
        <end position="254"/>
    </location>
</feature>
<feature type="topological domain" description="Extracellular" evidence="1">
    <location>
        <begin position="255"/>
        <end position="267"/>
    </location>
</feature>
<feature type="transmembrane region" description="Helical; Name=7" evidence="1">
    <location>
        <begin position="268"/>
        <end position="288"/>
    </location>
</feature>
<feature type="topological domain" description="Cytoplasmic" evidence="1">
    <location>
        <begin position="289"/>
        <end position="310"/>
    </location>
</feature>
<feature type="glycosylation site" description="N-linked (GlcNAc...) asparagine" evidence="1">
    <location>
        <position position="4"/>
    </location>
</feature>
<feature type="sequence variant" id="VAR_053253" description="In dbSNP:rs9885986.">
    <original>R</original>
    <variation>H</variation>
    <location>
        <position position="53"/>
    </location>
</feature>
<keyword id="KW-1003">Cell membrane</keyword>
<keyword id="KW-0297">G-protein coupled receptor</keyword>
<keyword id="KW-0325">Glycoprotein</keyword>
<keyword id="KW-0472">Membrane</keyword>
<keyword id="KW-0552">Olfaction</keyword>
<keyword id="KW-0675">Receptor</keyword>
<keyword id="KW-1185">Reference proteome</keyword>
<keyword id="KW-0716">Sensory transduction</keyword>
<keyword id="KW-0807">Transducer</keyword>
<keyword id="KW-0812">Transmembrane</keyword>
<keyword id="KW-1133">Transmembrane helix</keyword>
<protein>
    <recommendedName>
        <fullName>Olfactory receptor 9A2</fullName>
    </recommendedName>
    <alternativeName>
        <fullName>Olfactory receptor OR7-2</fullName>
    </alternativeName>
</protein>
<proteinExistence type="evidence at transcript level"/>
<reference key="1">
    <citation type="submission" date="2001-07" db="EMBL/GenBank/DDBJ databases">
        <title>Genome-wide discovery and analysis of human seven transmembrane helix receptor genes.</title>
        <authorList>
            <person name="Suwa M."/>
            <person name="Sato T."/>
            <person name="Okouchi I."/>
            <person name="Arita M."/>
            <person name="Futami K."/>
            <person name="Matsumoto S."/>
            <person name="Tsutsumi S."/>
            <person name="Aburatani H."/>
            <person name="Asai K."/>
            <person name="Akiyama Y."/>
        </authorList>
    </citation>
    <scope>NUCLEOTIDE SEQUENCE [GENOMIC DNA]</scope>
</reference>
<reference key="2">
    <citation type="submission" date="2005-09" db="EMBL/GenBank/DDBJ databases">
        <authorList>
            <person name="Mural R.J."/>
            <person name="Istrail S."/>
            <person name="Sutton G.G."/>
            <person name="Florea L."/>
            <person name="Halpern A.L."/>
            <person name="Mobarry C.M."/>
            <person name="Lippert R."/>
            <person name="Walenz B."/>
            <person name="Shatkay H."/>
            <person name="Dew I."/>
            <person name="Miller J.R."/>
            <person name="Flanigan M.J."/>
            <person name="Edwards N.J."/>
            <person name="Bolanos R."/>
            <person name="Fasulo D."/>
            <person name="Halldorsson B.V."/>
            <person name="Hannenhalli S."/>
            <person name="Turner R."/>
            <person name="Yooseph S."/>
            <person name="Lu F."/>
            <person name="Nusskern D.R."/>
            <person name="Shue B.C."/>
            <person name="Zheng X.H."/>
            <person name="Zhong F."/>
            <person name="Delcher A.L."/>
            <person name="Huson D.H."/>
            <person name="Kravitz S.A."/>
            <person name="Mouchard L."/>
            <person name="Reinert K."/>
            <person name="Remington K.A."/>
            <person name="Clark A.G."/>
            <person name="Waterman M.S."/>
            <person name="Eichler E.E."/>
            <person name="Adams M.D."/>
            <person name="Hunkapiller M.W."/>
            <person name="Myers E.W."/>
            <person name="Venter J.C."/>
        </authorList>
    </citation>
    <scope>NUCLEOTIDE SEQUENCE [LARGE SCALE GENOMIC DNA]</scope>
</reference>
<reference key="3">
    <citation type="journal article" date="2004" name="Genome Res.">
        <title>The status, quality, and expansion of the NIH full-length cDNA project: the Mammalian Gene Collection (MGC).</title>
        <authorList>
            <consortium name="The MGC Project Team"/>
        </authorList>
    </citation>
    <scope>NUCLEOTIDE SEQUENCE [LARGE SCALE MRNA]</scope>
    <source>
        <tissue>Testis</tissue>
    </source>
</reference>
<reference key="4">
    <citation type="journal article" date="2004" name="Proc. Natl. Acad. Sci. U.S.A.">
        <title>The human olfactory receptor gene family.</title>
        <authorList>
            <person name="Malnic B."/>
            <person name="Godfrey P.A."/>
            <person name="Buck L.B."/>
        </authorList>
    </citation>
    <scope>IDENTIFICATION</scope>
</reference>
<reference key="5">
    <citation type="journal article" date="2004" name="Proc. Natl. Acad. Sci. U.S.A.">
        <authorList>
            <person name="Malnic B."/>
            <person name="Godfrey P.A."/>
            <person name="Buck L.B."/>
        </authorList>
    </citation>
    <scope>ERRATUM OF PUBMED:14983052</scope>
</reference>
<evidence type="ECO:0000255" key="1"/>
<evidence type="ECO:0000255" key="2">
    <source>
        <dbReference type="PROSITE-ProRule" id="PRU00521"/>
    </source>
</evidence>
<evidence type="ECO:0000305" key="3"/>
<dbReference type="EMBL" id="AB065696">
    <property type="protein sequence ID" value="BAC05919.1"/>
    <property type="molecule type" value="Genomic_DNA"/>
</dbReference>
<dbReference type="EMBL" id="AB065874">
    <property type="protein sequence ID" value="BAC06092.1"/>
    <property type="molecule type" value="Genomic_DNA"/>
</dbReference>
<dbReference type="EMBL" id="CH471198">
    <property type="protein sequence ID" value="EAW51890.1"/>
    <property type="molecule type" value="Genomic_DNA"/>
</dbReference>
<dbReference type="EMBL" id="BC137048">
    <property type="protein sequence ID" value="AAI37049.1"/>
    <property type="molecule type" value="mRNA"/>
</dbReference>
<dbReference type="EMBL" id="BC137049">
    <property type="protein sequence ID" value="AAI37050.1"/>
    <property type="molecule type" value="mRNA"/>
</dbReference>
<dbReference type="EMBL" id="BK004391">
    <property type="protein sequence ID" value="DAA04789.1"/>
    <property type="molecule type" value="Genomic_DNA"/>
</dbReference>
<dbReference type="CCDS" id="CCDS34767.1"/>
<dbReference type="RefSeq" id="NP_001001658.1">
    <property type="nucleotide sequence ID" value="NM_001001658.1"/>
</dbReference>
<dbReference type="SMR" id="Q8NGT5"/>
<dbReference type="FunCoup" id="Q8NGT5">
    <property type="interactions" value="416"/>
</dbReference>
<dbReference type="STRING" id="9606.ENSP00000316518"/>
<dbReference type="GlyCosmos" id="Q8NGT5">
    <property type="glycosylation" value="1 site, No reported glycans"/>
</dbReference>
<dbReference type="GlyGen" id="Q8NGT5">
    <property type="glycosylation" value="1 site"/>
</dbReference>
<dbReference type="PhosphoSitePlus" id="Q8NGT5"/>
<dbReference type="BioMuta" id="OR9A2"/>
<dbReference type="DMDM" id="38372770"/>
<dbReference type="PaxDb" id="9606-ENSP00000316518"/>
<dbReference type="PeptideAtlas" id="Q8NGT5"/>
<dbReference type="Antibodypedia" id="64633">
    <property type="antibodies" value="60 antibodies from 17 providers"/>
</dbReference>
<dbReference type="DNASU" id="135924"/>
<dbReference type="Ensembl" id="ENST00000350513.3">
    <property type="protein sequence ID" value="ENSP00000316518.3"/>
    <property type="gene ID" value="ENSG00000179468.6"/>
</dbReference>
<dbReference type="Ensembl" id="ENST00000619330.2">
    <property type="protein sequence ID" value="ENSP00000479412.1"/>
    <property type="gene ID" value="ENSG00000273914.2"/>
</dbReference>
<dbReference type="GeneID" id="135924"/>
<dbReference type="KEGG" id="hsa:135924"/>
<dbReference type="MANE-Select" id="ENST00000350513.3">
    <property type="protein sequence ID" value="ENSP00000316518.3"/>
    <property type="RefSeq nucleotide sequence ID" value="NM_001001658.1"/>
    <property type="RefSeq protein sequence ID" value="NP_001001658.1"/>
</dbReference>
<dbReference type="UCSC" id="uc003wcc.2">
    <property type="organism name" value="human"/>
</dbReference>
<dbReference type="AGR" id="HGNC:15093"/>
<dbReference type="CTD" id="135924"/>
<dbReference type="DisGeNET" id="135924"/>
<dbReference type="GeneCards" id="OR9A2"/>
<dbReference type="HGNC" id="HGNC:15093">
    <property type="gene designation" value="OR9A2"/>
</dbReference>
<dbReference type="HPA" id="ENSG00000179468">
    <property type="expression patterns" value="Not detected"/>
</dbReference>
<dbReference type="neXtProt" id="NX_Q8NGT5"/>
<dbReference type="OpenTargets" id="ENSG00000179468"/>
<dbReference type="PharmGKB" id="PA32785"/>
<dbReference type="VEuPathDB" id="HostDB:ENSG00000179468"/>
<dbReference type="eggNOG" id="ENOG502QVH7">
    <property type="taxonomic scope" value="Eukaryota"/>
</dbReference>
<dbReference type="GeneTree" id="ENSGT00940000163070"/>
<dbReference type="HOGENOM" id="CLU_012526_1_1_1"/>
<dbReference type="InParanoid" id="Q8NGT5"/>
<dbReference type="OMA" id="HHILFAM"/>
<dbReference type="OrthoDB" id="6162029at2759"/>
<dbReference type="PAN-GO" id="Q8NGT5">
    <property type="GO annotations" value="0 GO annotations based on evolutionary models"/>
</dbReference>
<dbReference type="PhylomeDB" id="Q8NGT5"/>
<dbReference type="TreeFam" id="TF336833"/>
<dbReference type="PathwayCommons" id="Q8NGT5"/>
<dbReference type="Reactome" id="R-HSA-9752946">
    <property type="pathway name" value="Expression and translocation of olfactory receptors"/>
</dbReference>
<dbReference type="BioGRID-ORCS" id="135924">
    <property type="hits" value="10 hits in 741 CRISPR screens"/>
</dbReference>
<dbReference type="GeneWiki" id="OR9A2"/>
<dbReference type="GenomeRNAi" id="135924"/>
<dbReference type="Pharos" id="Q8NGT5">
    <property type="development level" value="Tdark"/>
</dbReference>
<dbReference type="PRO" id="PR:Q8NGT5"/>
<dbReference type="Proteomes" id="UP000005640">
    <property type="component" value="Chromosome 7"/>
</dbReference>
<dbReference type="RNAct" id="Q8NGT5">
    <property type="molecule type" value="protein"/>
</dbReference>
<dbReference type="Bgee" id="ENSG00000179468">
    <property type="expression patterns" value="Expressed in male germ line stem cell (sensu Vertebrata) in testis and 12 other cell types or tissues"/>
</dbReference>
<dbReference type="GO" id="GO:0005886">
    <property type="term" value="C:plasma membrane"/>
    <property type="evidence" value="ECO:0007669"/>
    <property type="project" value="UniProtKB-SubCell"/>
</dbReference>
<dbReference type="GO" id="GO:0004930">
    <property type="term" value="F:G protein-coupled receptor activity"/>
    <property type="evidence" value="ECO:0007669"/>
    <property type="project" value="UniProtKB-KW"/>
</dbReference>
<dbReference type="GO" id="GO:0004984">
    <property type="term" value="F:olfactory receptor activity"/>
    <property type="evidence" value="ECO:0007669"/>
    <property type="project" value="InterPro"/>
</dbReference>
<dbReference type="FunFam" id="1.20.1070.10:FF:000015">
    <property type="entry name" value="Olfactory receptor"/>
    <property type="match status" value="1"/>
</dbReference>
<dbReference type="Gene3D" id="1.20.1070.10">
    <property type="entry name" value="Rhodopsin 7-helix transmembrane proteins"/>
    <property type="match status" value="1"/>
</dbReference>
<dbReference type="InterPro" id="IPR000276">
    <property type="entry name" value="GPCR_Rhodpsn"/>
</dbReference>
<dbReference type="InterPro" id="IPR017452">
    <property type="entry name" value="GPCR_Rhodpsn_7TM"/>
</dbReference>
<dbReference type="InterPro" id="IPR000725">
    <property type="entry name" value="Olfact_rcpt"/>
</dbReference>
<dbReference type="InterPro" id="IPR047132">
    <property type="entry name" value="Olfact_rcpt_6C-like"/>
</dbReference>
<dbReference type="PANTHER" id="PTHR26454">
    <property type="entry name" value="OLFACTORY RECEPTOR"/>
    <property type="match status" value="1"/>
</dbReference>
<dbReference type="PANTHER" id="PTHR26454:SF18">
    <property type="entry name" value="OLFACTORY RECEPTOR 6C76"/>
    <property type="match status" value="1"/>
</dbReference>
<dbReference type="Pfam" id="PF13853">
    <property type="entry name" value="7tm_4"/>
    <property type="match status" value="1"/>
</dbReference>
<dbReference type="PRINTS" id="PR00237">
    <property type="entry name" value="GPCRRHODOPSN"/>
</dbReference>
<dbReference type="PRINTS" id="PR00245">
    <property type="entry name" value="OLFACTORYR"/>
</dbReference>
<dbReference type="SUPFAM" id="SSF81321">
    <property type="entry name" value="Family A G protein-coupled receptor-like"/>
    <property type="match status" value="1"/>
</dbReference>
<dbReference type="PROSITE" id="PS00237">
    <property type="entry name" value="G_PROTEIN_RECEP_F1_1"/>
    <property type="match status" value="1"/>
</dbReference>
<dbReference type="PROSITE" id="PS50262">
    <property type="entry name" value="G_PROTEIN_RECEP_F1_2"/>
    <property type="match status" value="1"/>
</dbReference>
<accession>Q8NGT5</accession>
<accession>B9EH51</accession>
<accession>Q6IF71</accession>
<accession>Q8NGD9</accession>
<gene>
    <name type="primary">OR9A2</name>
</gene>
<organism>
    <name type="scientific">Homo sapiens</name>
    <name type="common">Human</name>
    <dbReference type="NCBI Taxonomy" id="9606"/>
    <lineage>
        <taxon>Eukaryota</taxon>
        <taxon>Metazoa</taxon>
        <taxon>Chordata</taxon>
        <taxon>Craniata</taxon>
        <taxon>Vertebrata</taxon>
        <taxon>Euteleostomi</taxon>
        <taxon>Mammalia</taxon>
        <taxon>Eutheria</taxon>
        <taxon>Euarchontoglires</taxon>
        <taxon>Primates</taxon>
        <taxon>Haplorrhini</taxon>
        <taxon>Catarrhini</taxon>
        <taxon>Hominidae</taxon>
        <taxon>Homo</taxon>
    </lineage>
</organism>